<organism>
    <name type="scientific">Lactococcus lactis subsp. cremoris (strain MG1363)</name>
    <dbReference type="NCBI Taxonomy" id="416870"/>
    <lineage>
        <taxon>Bacteria</taxon>
        <taxon>Bacillati</taxon>
        <taxon>Bacillota</taxon>
        <taxon>Bacilli</taxon>
        <taxon>Lactobacillales</taxon>
        <taxon>Streptococcaceae</taxon>
        <taxon>Lactococcus</taxon>
        <taxon>Lactococcus cremoris subsp. cremoris</taxon>
    </lineage>
</organism>
<sequence>MKLKQIELKNFRNYEDLKLDFHPNLNIFLGQNAQGKTNILEAIHFLALTRSHRTSHDKELIRWSGQEMKVSGLVEKAHATVPLEVQLSSKGRIAKANHLKENRLADYIGQLKILMFAPENLELVKGSPATRRRFMDIELGQIHAVYLYDSMRYNRALKERNAYLKFDQAKIDKNFLTVLDEQLAEHGNKIMFERKTFIEKLEIHAKKIHEQLTHGLETLKITYNQNVKTDFSKELLSRQDHDIFRHQTTVGPHRDDLQFFINDINVADFGSQGQQRTVALSIKLAEIDLIFEETGEYPILLLDDVMSELDNHRQLDLIETSLGKTQTFITTTTLDHLKNLPENLSIFHVTDGTIEKEKE</sequence>
<gene>
    <name evidence="1" type="primary">recF</name>
    <name type="ordered locus">llmg_2229</name>
</gene>
<comment type="function">
    <text evidence="1">The RecF protein is involved in DNA metabolism; it is required for DNA replication and normal SOS inducibility. RecF binds preferentially to single-stranded, linear DNA. It also seems to bind ATP.</text>
</comment>
<comment type="subcellular location">
    <subcellularLocation>
        <location evidence="1">Cytoplasm</location>
    </subcellularLocation>
</comment>
<comment type="similarity">
    <text evidence="1">Belongs to the RecF family.</text>
</comment>
<name>RECF_LACLM</name>
<accession>A2RNA8</accession>
<reference key="1">
    <citation type="journal article" date="2007" name="J. Bacteriol.">
        <title>The complete genome sequence of the lactic acid bacterial paradigm Lactococcus lactis subsp. cremoris MG1363.</title>
        <authorList>
            <person name="Wegmann U."/>
            <person name="O'Connell-Motherway M."/>
            <person name="Zomer A."/>
            <person name="Buist G."/>
            <person name="Shearman C."/>
            <person name="Canchaya C."/>
            <person name="Ventura M."/>
            <person name="Goesmann A."/>
            <person name="Gasson M.J."/>
            <person name="Kuipers O.P."/>
            <person name="van Sinderen D."/>
            <person name="Kok J."/>
        </authorList>
    </citation>
    <scope>NUCLEOTIDE SEQUENCE [LARGE SCALE GENOMIC DNA]</scope>
    <source>
        <strain>MG1363</strain>
    </source>
</reference>
<dbReference type="EMBL" id="AM406671">
    <property type="protein sequence ID" value="CAL98796.1"/>
    <property type="molecule type" value="Genomic_DNA"/>
</dbReference>
<dbReference type="RefSeq" id="WP_011835920.1">
    <property type="nucleotide sequence ID" value="NC_009004.1"/>
</dbReference>
<dbReference type="SMR" id="A2RNA8"/>
<dbReference type="STRING" id="416870.llmg_2229"/>
<dbReference type="KEGG" id="llm:llmg_2229"/>
<dbReference type="eggNOG" id="COG1195">
    <property type="taxonomic scope" value="Bacteria"/>
</dbReference>
<dbReference type="HOGENOM" id="CLU_040267_0_1_9"/>
<dbReference type="OrthoDB" id="9803889at2"/>
<dbReference type="PhylomeDB" id="A2RNA8"/>
<dbReference type="Proteomes" id="UP000000364">
    <property type="component" value="Chromosome"/>
</dbReference>
<dbReference type="GO" id="GO:0005737">
    <property type="term" value="C:cytoplasm"/>
    <property type="evidence" value="ECO:0007669"/>
    <property type="project" value="UniProtKB-SubCell"/>
</dbReference>
<dbReference type="GO" id="GO:0005524">
    <property type="term" value="F:ATP binding"/>
    <property type="evidence" value="ECO:0007669"/>
    <property type="project" value="UniProtKB-UniRule"/>
</dbReference>
<dbReference type="GO" id="GO:0003697">
    <property type="term" value="F:single-stranded DNA binding"/>
    <property type="evidence" value="ECO:0007669"/>
    <property type="project" value="UniProtKB-UniRule"/>
</dbReference>
<dbReference type="GO" id="GO:0006260">
    <property type="term" value="P:DNA replication"/>
    <property type="evidence" value="ECO:0007669"/>
    <property type="project" value="UniProtKB-UniRule"/>
</dbReference>
<dbReference type="GO" id="GO:0000731">
    <property type="term" value="P:DNA synthesis involved in DNA repair"/>
    <property type="evidence" value="ECO:0007669"/>
    <property type="project" value="TreeGrafter"/>
</dbReference>
<dbReference type="GO" id="GO:0006302">
    <property type="term" value="P:double-strand break repair"/>
    <property type="evidence" value="ECO:0007669"/>
    <property type="project" value="TreeGrafter"/>
</dbReference>
<dbReference type="GO" id="GO:0009432">
    <property type="term" value="P:SOS response"/>
    <property type="evidence" value="ECO:0007669"/>
    <property type="project" value="UniProtKB-UniRule"/>
</dbReference>
<dbReference type="CDD" id="cd03242">
    <property type="entry name" value="ABC_RecF"/>
    <property type="match status" value="1"/>
</dbReference>
<dbReference type="Gene3D" id="3.40.50.300">
    <property type="entry name" value="P-loop containing nucleotide triphosphate hydrolases"/>
    <property type="match status" value="1"/>
</dbReference>
<dbReference type="Gene3D" id="1.20.1050.90">
    <property type="entry name" value="RecF/RecN/SMC, N-terminal domain"/>
    <property type="match status" value="1"/>
</dbReference>
<dbReference type="HAMAP" id="MF_00365">
    <property type="entry name" value="RecF"/>
    <property type="match status" value="1"/>
</dbReference>
<dbReference type="InterPro" id="IPR001238">
    <property type="entry name" value="DNA-binding_RecF"/>
</dbReference>
<dbReference type="InterPro" id="IPR018078">
    <property type="entry name" value="DNA-binding_RecF_CS"/>
</dbReference>
<dbReference type="InterPro" id="IPR027417">
    <property type="entry name" value="P-loop_NTPase"/>
</dbReference>
<dbReference type="InterPro" id="IPR003395">
    <property type="entry name" value="RecF/RecN/SMC_N"/>
</dbReference>
<dbReference type="InterPro" id="IPR042174">
    <property type="entry name" value="RecF_2"/>
</dbReference>
<dbReference type="NCBIfam" id="TIGR00611">
    <property type="entry name" value="recf"/>
    <property type="match status" value="1"/>
</dbReference>
<dbReference type="PANTHER" id="PTHR32182">
    <property type="entry name" value="DNA REPLICATION AND REPAIR PROTEIN RECF"/>
    <property type="match status" value="1"/>
</dbReference>
<dbReference type="PANTHER" id="PTHR32182:SF0">
    <property type="entry name" value="DNA REPLICATION AND REPAIR PROTEIN RECF"/>
    <property type="match status" value="1"/>
</dbReference>
<dbReference type="Pfam" id="PF02463">
    <property type="entry name" value="SMC_N"/>
    <property type="match status" value="1"/>
</dbReference>
<dbReference type="SUPFAM" id="SSF52540">
    <property type="entry name" value="P-loop containing nucleoside triphosphate hydrolases"/>
    <property type="match status" value="1"/>
</dbReference>
<dbReference type="PROSITE" id="PS00617">
    <property type="entry name" value="RECF_1"/>
    <property type="match status" value="1"/>
</dbReference>
<dbReference type="PROSITE" id="PS00618">
    <property type="entry name" value="RECF_2"/>
    <property type="match status" value="1"/>
</dbReference>
<keyword id="KW-0067">ATP-binding</keyword>
<keyword id="KW-0963">Cytoplasm</keyword>
<keyword id="KW-0227">DNA damage</keyword>
<keyword id="KW-0234">DNA repair</keyword>
<keyword id="KW-0235">DNA replication</keyword>
<keyword id="KW-0238">DNA-binding</keyword>
<keyword id="KW-0547">Nucleotide-binding</keyword>
<keyword id="KW-0742">SOS response</keyword>
<feature type="chain" id="PRO_1000048534" description="DNA replication and repair protein RecF">
    <location>
        <begin position="1"/>
        <end position="359"/>
    </location>
</feature>
<feature type="binding site" evidence="1">
    <location>
        <begin position="30"/>
        <end position="37"/>
    </location>
    <ligand>
        <name>ATP</name>
        <dbReference type="ChEBI" id="CHEBI:30616"/>
    </ligand>
</feature>
<protein>
    <recommendedName>
        <fullName evidence="1">DNA replication and repair protein RecF</fullName>
    </recommendedName>
</protein>
<proteinExistence type="inferred from homology"/>
<evidence type="ECO:0000255" key="1">
    <source>
        <dbReference type="HAMAP-Rule" id="MF_00365"/>
    </source>
</evidence>